<organism>
    <name type="scientific">Suid herpesvirus 1 (strain Indiana-Funkhauser / Becker)</name>
    <name type="common">SuHV-1</name>
    <name type="synonym">Pseudorabies virus (strain Indiana-Funkhauser / Becker)</name>
    <dbReference type="NCBI Taxonomy" id="31523"/>
    <lineage>
        <taxon>Viruses</taxon>
        <taxon>Duplodnaviria</taxon>
        <taxon>Heunggongvirae</taxon>
        <taxon>Peploviricota</taxon>
        <taxon>Herviviricetes</taxon>
        <taxon>Herpesvirales</taxon>
        <taxon>Orthoherpesviridae</taxon>
        <taxon>Alphaherpesvirinae</taxon>
        <taxon>Varicellovirus</taxon>
        <taxon>Varicellovirus suidalpha1</taxon>
        <taxon>Suid herpesvirus 1</taxon>
    </lineage>
</organism>
<name>UNG_SUHVF</name>
<proteinExistence type="inferred from homology"/>
<gene>
    <name type="primary">UL2</name>
</gene>
<feature type="chain" id="PRO_0000176195" description="Uracil-DNA glycosylase">
    <location>
        <begin position="1"/>
        <end position="315"/>
    </location>
</feature>
<feature type="region of interest" description="Disordered" evidence="2">
    <location>
        <begin position="35"/>
        <end position="88"/>
    </location>
</feature>
<feature type="compositionally biased region" description="Low complexity" evidence="2">
    <location>
        <begin position="35"/>
        <end position="80"/>
    </location>
</feature>
<feature type="active site" description="Proton acceptor" evidence="1">
    <location>
        <position position="158"/>
    </location>
</feature>
<feature type="sequence conflict" description="In Ref. 2." evidence="3" ref="2">
    <original>A</original>
    <variation>AA</variation>
    <location>
        <position position="26"/>
    </location>
</feature>
<comment type="function">
    <text evidence="1">Excises uracil residues from the DNA which can arise as a result of misincorporation of dUMP residues by DNA polymerase or deamination of cytosines. Therefore may reduce deleterious uracil incorporation into the viral genome, particularly in terminally differentiated cells which lack DNA repair enzymes.</text>
</comment>
<comment type="catalytic activity">
    <reaction evidence="1">
        <text>Hydrolyzes single-stranded DNA or mismatched double-stranded DNA and polynucleotides, releasing free uracil.</text>
        <dbReference type="EC" id="3.2.2.27"/>
    </reaction>
</comment>
<comment type="subcellular location">
    <subcellularLocation>
        <location evidence="1">Host nucleus</location>
    </subcellularLocation>
</comment>
<comment type="similarity">
    <text evidence="1">Belongs to the uracil-DNA glycosylase (UDG) superfamily. UNG family.</text>
</comment>
<comment type="sequence caution" evidence="3">
    <conflict type="erroneous initiation">
        <sequence resource="EMBL-CDS" id="AAA16422"/>
    </conflict>
</comment>
<evidence type="ECO:0000255" key="1">
    <source>
        <dbReference type="HAMAP-Rule" id="MF_04046"/>
    </source>
</evidence>
<evidence type="ECO:0000256" key="2">
    <source>
        <dbReference type="SAM" id="MobiDB-lite"/>
    </source>
</evidence>
<evidence type="ECO:0000305" key="3"/>
<reference key="1">
    <citation type="journal article" date="1994" name="J. Virol.">
        <title>Identification and characterization of a novel structural glycoprotein in pseudorabies virus, gL.</title>
        <authorList>
            <person name="Klupp B.G."/>
            <person name="Baumeister J."/>
            <person name="Karger A."/>
            <person name="Visser N."/>
            <person name="Mettenleiter T.C."/>
        </authorList>
    </citation>
    <scope>NUCLEOTIDE SEQUENCE</scope>
</reference>
<reference key="2">
    <citation type="journal article" date="1993" name="J. Virol.">
        <title>A 3' coterminal gene cluster in pseudorabies virus contains herpes simplex virus UL1, UL2, and UL3 gene homologs and a unique UL3.5 open reading frame.</title>
        <authorList>
            <person name="Dean H.J."/>
            <person name="Cheung A.K."/>
        </authorList>
    </citation>
    <scope>NUCLEOTIDE SEQUENCE</scope>
</reference>
<keyword id="KW-0227">DNA damage</keyword>
<keyword id="KW-0234">DNA repair</keyword>
<keyword id="KW-1048">Host nucleus</keyword>
<keyword id="KW-0378">Hydrolase</keyword>
<sequence length="315" mass="32911">MEGPPPSKRPCGLPPGVRLVVPAAAASASNAATAAAAAAPAGAGAGASKPARPPAAARPAKGTPAASAATTATGADASAPAPDPGAPTWDAFAAEFDVAPSWRALLEPEIAKPYARLLLAEYRGRCLTEEVLPAREDVFAWTRLTAPEDVKVVIIGQDPYHGPGQAHGLAFSVRRGVPIPPSLANIFAAVRATYPTLPAPAHGCLEAWARRGVLLLNTTLTVRRGVPGSHAPLGWARLVRAVVQRLCETRPKLVFMLWGAHAQKACAPDPRRHKVLTFSHPSPLARTPFRTCPHFGEANAYLVQTGRAPVDWSVD</sequence>
<accession>P52506</accession>
<accession>Q69399</accession>
<protein>
    <recommendedName>
        <fullName evidence="1">Uracil-DNA glycosylase</fullName>
        <shortName evidence="1">UDG</shortName>
        <ecNumber evidence="1">3.2.2.27</ecNumber>
    </recommendedName>
    <alternativeName>
        <fullName evidence="1">UNG</fullName>
    </alternativeName>
</protein>
<organismHost>
    <name type="scientific">Sus scrofa</name>
    <name type="common">Pig</name>
    <dbReference type="NCBI Taxonomy" id="9823"/>
</organismHost>
<dbReference type="EC" id="3.2.2.27" evidence="1"/>
<dbReference type="EMBL" id="U02512">
    <property type="protein sequence ID" value="AAA18856.1"/>
    <property type="molecule type" value="Unassigned_DNA"/>
</dbReference>
<dbReference type="EMBL" id="L13855">
    <property type="protein sequence ID" value="AAA16422.1"/>
    <property type="status" value="ALT_INIT"/>
    <property type="molecule type" value="Unassigned_DNA"/>
</dbReference>
<dbReference type="SMR" id="P52506"/>
<dbReference type="GO" id="GO:0042025">
    <property type="term" value="C:host cell nucleus"/>
    <property type="evidence" value="ECO:0007669"/>
    <property type="project" value="UniProtKB-SubCell"/>
</dbReference>
<dbReference type="GO" id="GO:0004844">
    <property type="term" value="F:uracil DNA N-glycosylase activity"/>
    <property type="evidence" value="ECO:0007669"/>
    <property type="project" value="UniProtKB-EC"/>
</dbReference>
<dbReference type="GO" id="GO:0097510">
    <property type="term" value="P:base-excision repair, AP site formation via deaminated base removal"/>
    <property type="evidence" value="ECO:0007669"/>
    <property type="project" value="TreeGrafter"/>
</dbReference>
<dbReference type="CDD" id="cd10027">
    <property type="entry name" value="UDG-F1-like"/>
    <property type="match status" value="1"/>
</dbReference>
<dbReference type="Gene3D" id="3.40.470.10">
    <property type="entry name" value="Uracil-DNA glycosylase-like domain"/>
    <property type="match status" value="1"/>
</dbReference>
<dbReference type="HAMAP" id="MF_00148">
    <property type="entry name" value="UDG"/>
    <property type="match status" value="1"/>
</dbReference>
<dbReference type="InterPro" id="IPR002043">
    <property type="entry name" value="UDG_fam1"/>
</dbReference>
<dbReference type="InterPro" id="IPR018085">
    <property type="entry name" value="Ura-DNA_Glyclase_AS"/>
</dbReference>
<dbReference type="InterPro" id="IPR005122">
    <property type="entry name" value="Uracil-DNA_glycosylase-like"/>
</dbReference>
<dbReference type="InterPro" id="IPR036895">
    <property type="entry name" value="Uracil-DNA_glycosylase-like_sf"/>
</dbReference>
<dbReference type="NCBIfam" id="NF003588">
    <property type="entry name" value="PRK05254.1-1"/>
    <property type="match status" value="1"/>
</dbReference>
<dbReference type="NCBIfam" id="NF003589">
    <property type="entry name" value="PRK05254.1-2"/>
    <property type="match status" value="1"/>
</dbReference>
<dbReference type="NCBIfam" id="NF003592">
    <property type="entry name" value="PRK05254.1-5"/>
    <property type="match status" value="1"/>
</dbReference>
<dbReference type="NCBIfam" id="TIGR00628">
    <property type="entry name" value="ung"/>
    <property type="match status" value="1"/>
</dbReference>
<dbReference type="PANTHER" id="PTHR11264">
    <property type="entry name" value="URACIL-DNA GLYCOSYLASE"/>
    <property type="match status" value="1"/>
</dbReference>
<dbReference type="PANTHER" id="PTHR11264:SF0">
    <property type="entry name" value="URACIL-DNA GLYCOSYLASE"/>
    <property type="match status" value="1"/>
</dbReference>
<dbReference type="Pfam" id="PF03167">
    <property type="entry name" value="UDG"/>
    <property type="match status" value="1"/>
</dbReference>
<dbReference type="SMART" id="SM00986">
    <property type="entry name" value="UDG"/>
    <property type="match status" value="1"/>
</dbReference>
<dbReference type="SMART" id="SM00987">
    <property type="entry name" value="UreE_C"/>
    <property type="match status" value="1"/>
</dbReference>
<dbReference type="SUPFAM" id="SSF52141">
    <property type="entry name" value="Uracil-DNA glycosylase-like"/>
    <property type="match status" value="1"/>
</dbReference>
<dbReference type="PROSITE" id="PS00130">
    <property type="entry name" value="U_DNA_GLYCOSYLASE"/>
    <property type="match status" value="1"/>
</dbReference>